<accession>Q6C186</accession>
<dbReference type="EMBL" id="CR382132">
    <property type="protein sequence ID" value="CAG78385.1"/>
    <property type="molecule type" value="Genomic_DNA"/>
</dbReference>
<dbReference type="RefSeq" id="XP_505576.1">
    <property type="nucleotide sequence ID" value="XM_505576.1"/>
</dbReference>
<dbReference type="SMR" id="Q6C186"/>
<dbReference type="FunCoup" id="Q6C186">
    <property type="interactions" value="1105"/>
</dbReference>
<dbReference type="STRING" id="284591.Q6C186"/>
<dbReference type="EnsemblFungi" id="CAG78385">
    <property type="protein sequence ID" value="CAG78385"/>
    <property type="gene ID" value="YALI0_F18392g"/>
</dbReference>
<dbReference type="KEGG" id="yli:2907810"/>
<dbReference type="VEuPathDB" id="FungiDB:YALI0_F18392g"/>
<dbReference type="HOGENOM" id="CLU_011554_1_0_1"/>
<dbReference type="InParanoid" id="Q6C186"/>
<dbReference type="OMA" id="HIKVWIS"/>
<dbReference type="OrthoDB" id="125908at4891"/>
<dbReference type="Proteomes" id="UP000001300">
    <property type="component" value="Chromosome F"/>
</dbReference>
<dbReference type="GO" id="GO:0071014">
    <property type="term" value="C:post-mRNA release spliceosomal complex"/>
    <property type="evidence" value="ECO:0000318"/>
    <property type="project" value="GO_Central"/>
</dbReference>
<dbReference type="GO" id="GO:0000974">
    <property type="term" value="C:Prp19 complex"/>
    <property type="evidence" value="ECO:0000318"/>
    <property type="project" value="GO_Central"/>
</dbReference>
<dbReference type="GO" id="GO:0071007">
    <property type="term" value="C:U2-type catalytic step 2 spliceosome"/>
    <property type="evidence" value="ECO:0000318"/>
    <property type="project" value="GO_Central"/>
</dbReference>
<dbReference type="GO" id="GO:0000398">
    <property type="term" value="P:mRNA splicing, via spliceosome"/>
    <property type="evidence" value="ECO:0000318"/>
    <property type="project" value="GO_Central"/>
</dbReference>
<dbReference type="GO" id="GO:0000245">
    <property type="term" value="P:spliceosomal complex assembly"/>
    <property type="evidence" value="ECO:0000318"/>
    <property type="project" value="GO_Central"/>
</dbReference>
<dbReference type="FunFam" id="1.25.40.10:FF:000306">
    <property type="entry name" value="Cell cycle control protein cwf4"/>
    <property type="match status" value="1"/>
</dbReference>
<dbReference type="FunFam" id="1.25.40.10:FF:002141">
    <property type="entry name" value="Pre-mRNA-splicing factor CLF1"/>
    <property type="match status" value="1"/>
</dbReference>
<dbReference type="Gene3D" id="1.25.40.10">
    <property type="entry name" value="Tetratricopeptide repeat domain"/>
    <property type="match status" value="5"/>
</dbReference>
<dbReference type="InterPro" id="IPR003107">
    <property type="entry name" value="HAT"/>
</dbReference>
<dbReference type="InterPro" id="IPR055433">
    <property type="entry name" value="HAT_Syf1-like_N"/>
</dbReference>
<dbReference type="InterPro" id="IPR055430">
    <property type="entry name" value="HAT_Syf1_CNRKL1_C"/>
</dbReference>
<dbReference type="InterPro" id="IPR045075">
    <property type="entry name" value="Syf1-like"/>
</dbReference>
<dbReference type="InterPro" id="IPR011990">
    <property type="entry name" value="TPR-like_helical_dom_sf"/>
</dbReference>
<dbReference type="PANTHER" id="PTHR11246:SF3">
    <property type="entry name" value="CROOKED NECK-LIKE PROTEIN 1"/>
    <property type="match status" value="1"/>
</dbReference>
<dbReference type="PANTHER" id="PTHR11246">
    <property type="entry name" value="PRE-MRNA SPLICING FACTOR"/>
    <property type="match status" value="1"/>
</dbReference>
<dbReference type="Pfam" id="PF23231">
    <property type="entry name" value="HAT_Syf1_CNRKL1_C"/>
    <property type="match status" value="1"/>
</dbReference>
<dbReference type="Pfam" id="PF23233">
    <property type="entry name" value="HAT_Syf1_CNRKL1_N"/>
    <property type="match status" value="1"/>
</dbReference>
<dbReference type="SMART" id="SM00386">
    <property type="entry name" value="HAT"/>
    <property type="match status" value="13"/>
</dbReference>
<dbReference type="SUPFAM" id="SSF48452">
    <property type="entry name" value="TPR-like"/>
    <property type="match status" value="3"/>
</dbReference>
<organism>
    <name type="scientific">Yarrowia lipolytica (strain CLIB 122 / E 150)</name>
    <name type="common">Yeast</name>
    <name type="synonym">Candida lipolytica</name>
    <dbReference type="NCBI Taxonomy" id="284591"/>
    <lineage>
        <taxon>Eukaryota</taxon>
        <taxon>Fungi</taxon>
        <taxon>Dikarya</taxon>
        <taxon>Ascomycota</taxon>
        <taxon>Saccharomycotina</taxon>
        <taxon>Dipodascomycetes</taxon>
        <taxon>Dipodascales</taxon>
        <taxon>Dipodascales incertae sedis</taxon>
        <taxon>Yarrowia</taxon>
    </lineage>
</organism>
<feature type="chain" id="PRO_0000205752" description="Pre-mRNA-splicing factor CLF1">
    <location>
        <begin position="1"/>
        <end position="676"/>
    </location>
</feature>
<feature type="repeat" description="HAT 1">
    <location>
        <begin position="46"/>
        <end position="78"/>
    </location>
</feature>
<feature type="repeat" description="HAT 2">
    <location>
        <begin position="80"/>
        <end position="112"/>
    </location>
</feature>
<feature type="repeat" description="HAT 3">
    <location>
        <begin position="114"/>
        <end position="146"/>
    </location>
</feature>
<feature type="repeat" description="HAT 4">
    <location>
        <begin position="148"/>
        <end position="179"/>
    </location>
</feature>
<feature type="repeat" description="HAT 5">
    <location>
        <begin position="181"/>
        <end position="212"/>
    </location>
</feature>
<feature type="repeat" description="HAT 6">
    <location>
        <begin position="215"/>
        <end position="255"/>
    </location>
</feature>
<feature type="repeat" description="HAT 7">
    <location>
        <begin position="257"/>
        <end position="291"/>
    </location>
</feature>
<feature type="repeat" description="HAT 8">
    <location>
        <begin position="301"/>
        <end position="333"/>
    </location>
</feature>
<feature type="repeat" description="HAT 9">
    <location>
        <begin position="336"/>
        <end position="369"/>
    </location>
</feature>
<feature type="repeat" description="HAT 10">
    <location>
        <begin position="379"/>
        <end position="415"/>
    </location>
</feature>
<feature type="repeat" description="HAT 11">
    <location>
        <begin position="417"/>
        <end position="449"/>
    </location>
</feature>
<feature type="repeat" description="HAT 12">
    <location>
        <begin position="451"/>
        <end position="483"/>
    </location>
</feature>
<feature type="repeat" description="HAT 13">
    <location>
        <begin position="485"/>
        <end position="519"/>
    </location>
</feature>
<feature type="repeat" description="HAT 14">
    <location>
        <begin position="521"/>
        <end position="553"/>
    </location>
</feature>
<feature type="repeat" description="HAT 15">
    <location>
        <begin position="576"/>
        <end position="614"/>
    </location>
</feature>
<feature type="repeat" description="HAT 16">
    <location>
        <begin position="620"/>
        <end position="652"/>
    </location>
</feature>
<feature type="region of interest" description="Disordered" evidence="2">
    <location>
        <begin position="616"/>
        <end position="636"/>
    </location>
</feature>
<feature type="compositionally biased region" description="Basic and acidic residues" evidence="2">
    <location>
        <begin position="616"/>
        <end position="628"/>
    </location>
</feature>
<gene>
    <name type="primary">CLF1</name>
    <name type="ordered locus">YALI0F18392g</name>
</gene>
<sequence>MEGRVKNKAPAALQISAEQILLEAYERKETPLQQTEQIADLEELAEYQGRKRQEYEGALRRNRLNTGQWMRYAQWELEQREFARARSVFERALEVNSTHVPTWIRYIQCELKEKNINHARNLLDRAVTLLPRVDKLWFTYVATEETLGNIAGCRAVFERWMHWRPPVTAWAAYVNMEKRYREFDRARGILRRYVTVHPGAPAWNKWAKFEMEAGNRDTVREVYALGIDTLVEMAHGGVDFLDESLLAGWASFETRHREYERARALYTYGLEKLPKSKSAKLYADYTAFEKQYGAKEGIENVVLTKRRSKYEDQLKEDPADYDTWFSYITLGQESGLEADQIREIFERAVSNVPPHSKRLWRRYIFLWIKYAIWEELENKEVEKAREIYKTCISIIPHKKFTFAKVWLLWAKFEIRHGNLPEARKILGRGLGMSGGKPALYKGYIALEAKLREFDRCRKLYDKYVEKFAEFAAPWMEYAELEQMLGDEERARAIFELAVSQPEMEMPELVWKRFIEFEAEEENYDRARAIYRQLLDRTHGHIKVWISFAQFEVTVPAEDQELQYNDEGEAEIEVTEEAKARARSIFGEAWDALKAANKREERVVLFESWREFEEEHGDDKSKADLDKRKPTPVKKKRKLEDGTFEEYIDYVFPTDEEDKSFSKLLENARKWKLQNQS</sequence>
<comment type="function">
    <text evidence="1">Involved in pre-mRNA splicing and cell cycle progression. Required for the spliceosome assembly and initiation of the DNA replication (By similarity).</text>
</comment>
<comment type="subunit">
    <text evidence="1">Associated with the spliceosome.</text>
</comment>
<comment type="subcellular location">
    <subcellularLocation>
        <location evidence="1">Nucleus</location>
    </subcellularLocation>
</comment>
<comment type="similarity">
    <text evidence="3">Belongs to the crooked-neck family.</text>
</comment>
<name>CLF1_YARLI</name>
<reference key="1">
    <citation type="journal article" date="2004" name="Nature">
        <title>Genome evolution in yeasts.</title>
        <authorList>
            <person name="Dujon B."/>
            <person name="Sherman D."/>
            <person name="Fischer G."/>
            <person name="Durrens P."/>
            <person name="Casaregola S."/>
            <person name="Lafontaine I."/>
            <person name="de Montigny J."/>
            <person name="Marck C."/>
            <person name="Neuveglise C."/>
            <person name="Talla E."/>
            <person name="Goffard N."/>
            <person name="Frangeul L."/>
            <person name="Aigle M."/>
            <person name="Anthouard V."/>
            <person name="Babour A."/>
            <person name="Barbe V."/>
            <person name="Barnay S."/>
            <person name="Blanchin S."/>
            <person name="Beckerich J.-M."/>
            <person name="Beyne E."/>
            <person name="Bleykasten C."/>
            <person name="Boisrame A."/>
            <person name="Boyer J."/>
            <person name="Cattolico L."/>
            <person name="Confanioleri F."/>
            <person name="de Daruvar A."/>
            <person name="Despons L."/>
            <person name="Fabre E."/>
            <person name="Fairhead C."/>
            <person name="Ferry-Dumazet H."/>
            <person name="Groppi A."/>
            <person name="Hantraye F."/>
            <person name="Hennequin C."/>
            <person name="Jauniaux N."/>
            <person name="Joyet P."/>
            <person name="Kachouri R."/>
            <person name="Kerrest A."/>
            <person name="Koszul R."/>
            <person name="Lemaire M."/>
            <person name="Lesur I."/>
            <person name="Ma L."/>
            <person name="Muller H."/>
            <person name="Nicaud J.-M."/>
            <person name="Nikolski M."/>
            <person name="Oztas S."/>
            <person name="Ozier-Kalogeropoulos O."/>
            <person name="Pellenz S."/>
            <person name="Potier S."/>
            <person name="Richard G.-F."/>
            <person name="Straub M.-L."/>
            <person name="Suleau A."/>
            <person name="Swennen D."/>
            <person name="Tekaia F."/>
            <person name="Wesolowski-Louvel M."/>
            <person name="Westhof E."/>
            <person name="Wirth B."/>
            <person name="Zeniou-Meyer M."/>
            <person name="Zivanovic Y."/>
            <person name="Bolotin-Fukuhara M."/>
            <person name="Thierry A."/>
            <person name="Bouchier C."/>
            <person name="Caudron B."/>
            <person name="Scarpelli C."/>
            <person name="Gaillardin C."/>
            <person name="Weissenbach J."/>
            <person name="Wincker P."/>
            <person name="Souciet J.-L."/>
        </authorList>
    </citation>
    <scope>NUCLEOTIDE SEQUENCE [LARGE SCALE GENOMIC DNA]</scope>
    <source>
        <strain>CLIB 122 / E 150</strain>
    </source>
</reference>
<protein>
    <recommendedName>
        <fullName>Pre-mRNA-splicing factor CLF1</fullName>
    </recommendedName>
</protein>
<keyword id="KW-0507">mRNA processing</keyword>
<keyword id="KW-0508">mRNA splicing</keyword>
<keyword id="KW-0539">Nucleus</keyword>
<keyword id="KW-1185">Reference proteome</keyword>
<keyword id="KW-0677">Repeat</keyword>
<keyword id="KW-0747">Spliceosome</keyword>
<proteinExistence type="inferred from homology"/>
<evidence type="ECO:0000250" key="1"/>
<evidence type="ECO:0000256" key="2">
    <source>
        <dbReference type="SAM" id="MobiDB-lite"/>
    </source>
</evidence>
<evidence type="ECO:0000305" key="3"/>